<comment type="function">
    <text evidence="1">Catalyzes the reversible retro-aldol cleavage of 2-keto-3-deoxy-L-rhamnonate (KDR) to pyruvate and lactaldehyde.</text>
</comment>
<comment type="catalytic activity">
    <reaction evidence="1">
        <text>2-dehydro-3-deoxy-L-rhamnonate = (S)-lactaldehyde + pyruvate</text>
        <dbReference type="Rhea" id="RHEA:25784"/>
        <dbReference type="ChEBI" id="CHEBI:15361"/>
        <dbReference type="ChEBI" id="CHEBI:18041"/>
        <dbReference type="ChEBI" id="CHEBI:58371"/>
        <dbReference type="EC" id="4.1.2.53"/>
    </reaction>
</comment>
<comment type="cofactor">
    <cofactor evidence="1">
        <name>Mg(2+)</name>
        <dbReference type="ChEBI" id="CHEBI:18420"/>
    </cofactor>
    <text evidence="1">Binds 1 Mg(2+) ion per subunit.</text>
</comment>
<comment type="subunit">
    <text evidence="1">Homohexamer.</text>
</comment>
<comment type="similarity">
    <text evidence="1">Belongs to the HpcH/HpaI aldolase family. KDR aldolase subfamily.</text>
</comment>
<proteinExistence type="inferred from homology"/>
<sequence length="267" mass="28757">MNALLSNPFKEGLRKGDTQIGLWLSSTTSYMAEIAATSGYDWLLIDGEHAPNTVQDLYHQLQAIAPYASQPVIRPIEGSKALIKQVLDIGAQTLLIPMVDTAEQARQVVSATRYPPLGQRGVGASVARAARWGRIDNYMAQANESLCLLVQVESKVALENLDAILEVEGIDGVFIGPADLSASLGYPDNAGHPEVQRIIEACIYRIRAAGKAAGFLAVDPTMAQKCLAWGANFVAVGVDTMLYTEALDSRLAMFKSVQSVSTAKRSY</sequence>
<gene>
    <name evidence="1" type="primary">rhmA</name>
    <name type="ordered locus">SeD_A2633</name>
</gene>
<protein>
    <recommendedName>
        <fullName evidence="1">2-keto-3-deoxy-L-rhamnonate aldolase</fullName>
        <shortName evidence="1">KDR aldolase</shortName>
        <ecNumber evidence="1">4.1.2.53</ecNumber>
    </recommendedName>
    <alternativeName>
        <fullName evidence="1">2-dehydro-3-deoxyrhamnonate aldolase</fullName>
    </alternativeName>
</protein>
<evidence type="ECO:0000255" key="1">
    <source>
        <dbReference type="HAMAP-Rule" id="MF_01290"/>
    </source>
</evidence>
<accession>B5FNS9</accession>
<feature type="chain" id="PRO_1000140397" description="2-keto-3-deoxy-L-rhamnonate aldolase">
    <location>
        <begin position="1"/>
        <end position="267"/>
    </location>
</feature>
<feature type="active site" description="Proton acceptor" evidence="1">
    <location>
        <position position="49"/>
    </location>
</feature>
<feature type="binding site" evidence="1">
    <location>
        <position position="151"/>
    </location>
    <ligand>
        <name>substrate</name>
    </ligand>
</feature>
<feature type="binding site" evidence="1">
    <location>
        <position position="153"/>
    </location>
    <ligand>
        <name>Mg(2+)</name>
        <dbReference type="ChEBI" id="CHEBI:18420"/>
    </ligand>
</feature>
<feature type="binding site" evidence="1">
    <location>
        <position position="178"/>
    </location>
    <ligand>
        <name>substrate</name>
    </ligand>
</feature>
<feature type="binding site" evidence="1">
    <location>
        <position position="179"/>
    </location>
    <ligand>
        <name>Mg(2+)</name>
        <dbReference type="ChEBI" id="CHEBI:18420"/>
    </ligand>
</feature>
<feature type="binding site" evidence="1">
    <location>
        <position position="179"/>
    </location>
    <ligand>
        <name>substrate</name>
    </ligand>
</feature>
<feature type="site" description="Transition state stabilizer" evidence="1">
    <location>
        <position position="74"/>
    </location>
</feature>
<feature type="site" description="Increases basicity of active site His" evidence="1">
    <location>
        <position position="88"/>
    </location>
</feature>
<dbReference type="EC" id="4.1.2.53" evidence="1"/>
<dbReference type="EMBL" id="CP001144">
    <property type="protein sequence ID" value="ACH77828.1"/>
    <property type="molecule type" value="Genomic_DNA"/>
</dbReference>
<dbReference type="SMR" id="B5FNS9"/>
<dbReference type="KEGG" id="sed:SeD_A2633"/>
<dbReference type="HOGENOM" id="CLU_059964_1_0_6"/>
<dbReference type="Proteomes" id="UP000008322">
    <property type="component" value="Chromosome"/>
</dbReference>
<dbReference type="GO" id="GO:0005737">
    <property type="term" value="C:cytoplasm"/>
    <property type="evidence" value="ECO:0007669"/>
    <property type="project" value="TreeGrafter"/>
</dbReference>
<dbReference type="GO" id="GO:0106099">
    <property type="term" value="F:2-keto-3-deoxy-L-rhamnonate aldolase activity"/>
    <property type="evidence" value="ECO:0007669"/>
    <property type="project" value="UniProtKB-EC"/>
</dbReference>
<dbReference type="GO" id="GO:0000287">
    <property type="term" value="F:magnesium ion binding"/>
    <property type="evidence" value="ECO:0007669"/>
    <property type="project" value="UniProtKB-UniRule"/>
</dbReference>
<dbReference type="FunFam" id="3.20.20.60:FF:000004">
    <property type="entry name" value="5-keto-4-deoxy-D-glucarate aldolase"/>
    <property type="match status" value="1"/>
</dbReference>
<dbReference type="Gene3D" id="3.20.20.60">
    <property type="entry name" value="Phosphoenolpyruvate-binding domains"/>
    <property type="match status" value="1"/>
</dbReference>
<dbReference type="HAMAP" id="MF_01290">
    <property type="entry name" value="KDR_aldolase"/>
    <property type="match status" value="1"/>
</dbReference>
<dbReference type="InterPro" id="IPR005000">
    <property type="entry name" value="Aldolase/citrate-lyase_domain"/>
</dbReference>
<dbReference type="InterPro" id="IPR050251">
    <property type="entry name" value="HpcH-HpaI_aldolase"/>
</dbReference>
<dbReference type="InterPro" id="IPR023593">
    <property type="entry name" value="KDR_aldolase"/>
</dbReference>
<dbReference type="InterPro" id="IPR015813">
    <property type="entry name" value="Pyrv/PenolPyrv_kinase-like_dom"/>
</dbReference>
<dbReference type="InterPro" id="IPR040442">
    <property type="entry name" value="Pyrv_kinase-like_dom_sf"/>
</dbReference>
<dbReference type="NCBIfam" id="NF007521">
    <property type="entry name" value="PRK10128.1"/>
    <property type="match status" value="1"/>
</dbReference>
<dbReference type="PANTHER" id="PTHR30502">
    <property type="entry name" value="2-KETO-3-DEOXY-L-RHAMNONATE ALDOLASE"/>
    <property type="match status" value="1"/>
</dbReference>
<dbReference type="PANTHER" id="PTHR30502:SF5">
    <property type="entry name" value="2-KETO-3-DEOXY-L-RHAMNONATE ALDOLASE"/>
    <property type="match status" value="1"/>
</dbReference>
<dbReference type="Pfam" id="PF03328">
    <property type="entry name" value="HpcH_HpaI"/>
    <property type="match status" value="1"/>
</dbReference>
<dbReference type="SUPFAM" id="SSF51621">
    <property type="entry name" value="Phosphoenolpyruvate/pyruvate domain"/>
    <property type="match status" value="1"/>
</dbReference>
<keyword id="KW-0456">Lyase</keyword>
<keyword id="KW-0460">Magnesium</keyword>
<keyword id="KW-0479">Metal-binding</keyword>
<name>RHMA_SALDC</name>
<organism>
    <name type="scientific">Salmonella dublin (strain CT_02021853)</name>
    <dbReference type="NCBI Taxonomy" id="439851"/>
    <lineage>
        <taxon>Bacteria</taxon>
        <taxon>Pseudomonadati</taxon>
        <taxon>Pseudomonadota</taxon>
        <taxon>Gammaproteobacteria</taxon>
        <taxon>Enterobacterales</taxon>
        <taxon>Enterobacteriaceae</taxon>
        <taxon>Salmonella</taxon>
    </lineage>
</organism>
<reference key="1">
    <citation type="journal article" date="2011" name="J. Bacteriol.">
        <title>Comparative genomics of 28 Salmonella enterica isolates: evidence for CRISPR-mediated adaptive sublineage evolution.</title>
        <authorList>
            <person name="Fricke W.F."/>
            <person name="Mammel M.K."/>
            <person name="McDermott P.F."/>
            <person name="Tartera C."/>
            <person name="White D.G."/>
            <person name="Leclerc J.E."/>
            <person name="Ravel J."/>
            <person name="Cebula T.A."/>
        </authorList>
    </citation>
    <scope>NUCLEOTIDE SEQUENCE [LARGE SCALE GENOMIC DNA]</scope>
    <source>
        <strain>CT_02021853</strain>
    </source>
</reference>